<proteinExistence type="inferred from homology"/>
<organism>
    <name type="scientific">Campylobacter hominis (strain ATCC BAA-381 / DSM 21671 / CCUG 45161 / LMG 19568 / NCTC 13146 / CH001A)</name>
    <dbReference type="NCBI Taxonomy" id="360107"/>
    <lineage>
        <taxon>Bacteria</taxon>
        <taxon>Pseudomonadati</taxon>
        <taxon>Campylobacterota</taxon>
        <taxon>Epsilonproteobacteria</taxon>
        <taxon>Campylobacterales</taxon>
        <taxon>Campylobacteraceae</taxon>
        <taxon>Campylobacter</taxon>
    </lineage>
</organism>
<protein>
    <recommendedName>
        <fullName evidence="1">Large ribosomal subunit protein bL20</fullName>
    </recommendedName>
    <alternativeName>
        <fullName evidence="2">50S ribosomal protein L20</fullName>
    </alternativeName>
</protein>
<comment type="function">
    <text evidence="1">Binds directly to 23S ribosomal RNA and is necessary for the in vitro assembly process of the 50S ribosomal subunit. It is not involved in the protein synthesizing functions of that subunit.</text>
</comment>
<comment type="similarity">
    <text evidence="1">Belongs to the bacterial ribosomal protein bL20 family.</text>
</comment>
<reference key="1">
    <citation type="submission" date="2007-07" db="EMBL/GenBank/DDBJ databases">
        <title>Complete genome sequence of Campylobacter hominis ATCC BAA-381, a commensal isolated from the human gastrointestinal tract.</title>
        <authorList>
            <person name="Fouts D.E."/>
            <person name="Mongodin E.F."/>
            <person name="Puiu D."/>
            <person name="Sebastian Y."/>
            <person name="Miller W.G."/>
            <person name="Mandrell R.E."/>
            <person name="Nelson K.E."/>
        </authorList>
    </citation>
    <scope>NUCLEOTIDE SEQUENCE [LARGE SCALE GENOMIC DNA]</scope>
    <source>
        <strain>ATCC BAA-381 / DSM 21671 / CCUG 45161 / LMG 19568 / NCTC 13146 / CH001A</strain>
    </source>
</reference>
<sequence length="117" mass="13820">MARVKTGVVRRRRHKKVLKLARGFFSARRKHFRKAKEQVERSLVYSYRDRRNKKRDFRRLWIVRINAACRLNDISYSKFINALKKANIELDRKVLADLAMNDAAAFSAIVAQAKKVM</sequence>
<accession>A7I0P1</accession>
<evidence type="ECO:0000255" key="1">
    <source>
        <dbReference type="HAMAP-Rule" id="MF_00382"/>
    </source>
</evidence>
<evidence type="ECO:0000305" key="2"/>
<name>RL20_CAMHC</name>
<feature type="chain" id="PRO_1000048950" description="Large ribosomal subunit protein bL20">
    <location>
        <begin position="1"/>
        <end position="117"/>
    </location>
</feature>
<gene>
    <name evidence="1" type="primary">rplT</name>
    <name type="ordered locus">CHAB381_0494</name>
</gene>
<keyword id="KW-1185">Reference proteome</keyword>
<keyword id="KW-0687">Ribonucleoprotein</keyword>
<keyword id="KW-0689">Ribosomal protein</keyword>
<keyword id="KW-0694">RNA-binding</keyword>
<keyword id="KW-0699">rRNA-binding</keyword>
<dbReference type="EMBL" id="CP000776">
    <property type="protein sequence ID" value="ABS50928.1"/>
    <property type="molecule type" value="Genomic_DNA"/>
</dbReference>
<dbReference type="RefSeq" id="WP_012108367.1">
    <property type="nucleotide sequence ID" value="NC_009714.1"/>
</dbReference>
<dbReference type="SMR" id="A7I0P1"/>
<dbReference type="STRING" id="360107.CHAB381_0494"/>
<dbReference type="KEGG" id="cha:CHAB381_0494"/>
<dbReference type="eggNOG" id="COG0292">
    <property type="taxonomic scope" value="Bacteria"/>
</dbReference>
<dbReference type="HOGENOM" id="CLU_123265_0_1_7"/>
<dbReference type="OrthoDB" id="9808966at2"/>
<dbReference type="Proteomes" id="UP000002407">
    <property type="component" value="Chromosome"/>
</dbReference>
<dbReference type="GO" id="GO:1990904">
    <property type="term" value="C:ribonucleoprotein complex"/>
    <property type="evidence" value="ECO:0007669"/>
    <property type="project" value="UniProtKB-KW"/>
</dbReference>
<dbReference type="GO" id="GO:0005840">
    <property type="term" value="C:ribosome"/>
    <property type="evidence" value="ECO:0007669"/>
    <property type="project" value="UniProtKB-KW"/>
</dbReference>
<dbReference type="GO" id="GO:0019843">
    <property type="term" value="F:rRNA binding"/>
    <property type="evidence" value="ECO:0007669"/>
    <property type="project" value="UniProtKB-UniRule"/>
</dbReference>
<dbReference type="GO" id="GO:0003735">
    <property type="term" value="F:structural constituent of ribosome"/>
    <property type="evidence" value="ECO:0007669"/>
    <property type="project" value="InterPro"/>
</dbReference>
<dbReference type="GO" id="GO:0000027">
    <property type="term" value="P:ribosomal large subunit assembly"/>
    <property type="evidence" value="ECO:0007669"/>
    <property type="project" value="UniProtKB-UniRule"/>
</dbReference>
<dbReference type="GO" id="GO:0006412">
    <property type="term" value="P:translation"/>
    <property type="evidence" value="ECO:0007669"/>
    <property type="project" value="InterPro"/>
</dbReference>
<dbReference type="CDD" id="cd07026">
    <property type="entry name" value="Ribosomal_L20"/>
    <property type="match status" value="1"/>
</dbReference>
<dbReference type="FunFam" id="1.10.1900.20:FF:000001">
    <property type="entry name" value="50S ribosomal protein L20"/>
    <property type="match status" value="1"/>
</dbReference>
<dbReference type="Gene3D" id="6.10.160.10">
    <property type="match status" value="1"/>
</dbReference>
<dbReference type="Gene3D" id="1.10.1900.20">
    <property type="entry name" value="Ribosomal protein L20"/>
    <property type="match status" value="1"/>
</dbReference>
<dbReference type="HAMAP" id="MF_00382">
    <property type="entry name" value="Ribosomal_bL20"/>
    <property type="match status" value="1"/>
</dbReference>
<dbReference type="InterPro" id="IPR005813">
    <property type="entry name" value="Ribosomal_bL20"/>
</dbReference>
<dbReference type="InterPro" id="IPR049946">
    <property type="entry name" value="RIBOSOMAL_L20_CS"/>
</dbReference>
<dbReference type="InterPro" id="IPR035566">
    <property type="entry name" value="Ribosomal_protein_bL20_C"/>
</dbReference>
<dbReference type="NCBIfam" id="TIGR01032">
    <property type="entry name" value="rplT_bact"/>
    <property type="match status" value="1"/>
</dbReference>
<dbReference type="PANTHER" id="PTHR10986">
    <property type="entry name" value="39S RIBOSOMAL PROTEIN L20"/>
    <property type="match status" value="1"/>
</dbReference>
<dbReference type="Pfam" id="PF00453">
    <property type="entry name" value="Ribosomal_L20"/>
    <property type="match status" value="1"/>
</dbReference>
<dbReference type="PRINTS" id="PR00062">
    <property type="entry name" value="RIBOSOMALL20"/>
</dbReference>
<dbReference type="SUPFAM" id="SSF74731">
    <property type="entry name" value="Ribosomal protein L20"/>
    <property type="match status" value="1"/>
</dbReference>
<dbReference type="PROSITE" id="PS00937">
    <property type="entry name" value="RIBOSOMAL_L20"/>
    <property type="match status" value="1"/>
</dbReference>